<gene>
    <name evidence="1" type="primary">infA</name>
    <name type="ordered locus">CLI_3639</name>
</gene>
<keyword id="KW-0963">Cytoplasm</keyword>
<keyword id="KW-0396">Initiation factor</keyword>
<keyword id="KW-0648">Protein biosynthesis</keyword>
<keyword id="KW-0694">RNA-binding</keyword>
<keyword id="KW-0699">rRNA-binding</keyword>
<protein>
    <recommendedName>
        <fullName evidence="1">Translation initiation factor IF-1</fullName>
    </recommendedName>
</protein>
<proteinExistence type="inferred from homology"/>
<sequence length="72" mass="8184">MSKDDVIEMQGTVLESLPNAMFEVELESGHKIIAHISGKLRMNFIRILPGDKVTVELSPYDLTRGRITWRAK</sequence>
<dbReference type="EMBL" id="CP000728">
    <property type="protein sequence ID" value="ABS41411.1"/>
    <property type="molecule type" value="Genomic_DNA"/>
</dbReference>
<dbReference type="RefSeq" id="WP_003357316.1">
    <property type="nucleotide sequence ID" value="NC_009699.1"/>
</dbReference>
<dbReference type="SMR" id="A7GJ50"/>
<dbReference type="GeneID" id="92940226"/>
<dbReference type="KEGG" id="cbf:CLI_3639"/>
<dbReference type="HOGENOM" id="CLU_151267_1_0_9"/>
<dbReference type="Proteomes" id="UP000002410">
    <property type="component" value="Chromosome"/>
</dbReference>
<dbReference type="GO" id="GO:0005829">
    <property type="term" value="C:cytosol"/>
    <property type="evidence" value="ECO:0007669"/>
    <property type="project" value="TreeGrafter"/>
</dbReference>
<dbReference type="GO" id="GO:0043022">
    <property type="term" value="F:ribosome binding"/>
    <property type="evidence" value="ECO:0007669"/>
    <property type="project" value="UniProtKB-UniRule"/>
</dbReference>
<dbReference type="GO" id="GO:0019843">
    <property type="term" value="F:rRNA binding"/>
    <property type="evidence" value="ECO:0007669"/>
    <property type="project" value="UniProtKB-UniRule"/>
</dbReference>
<dbReference type="GO" id="GO:0003743">
    <property type="term" value="F:translation initiation factor activity"/>
    <property type="evidence" value="ECO:0007669"/>
    <property type="project" value="UniProtKB-UniRule"/>
</dbReference>
<dbReference type="CDD" id="cd04451">
    <property type="entry name" value="S1_IF1"/>
    <property type="match status" value="1"/>
</dbReference>
<dbReference type="FunFam" id="2.40.50.140:FF:000002">
    <property type="entry name" value="Translation initiation factor IF-1"/>
    <property type="match status" value="1"/>
</dbReference>
<dbReference type="Gene3D" id="2.40.50.140">
    <property type="entry name" value="Nucleic acid-binding proteins"/>
    <property type="match status" value="1"/>
</dbReference>
<dbReference type="HAMAP" id="MF_00075">
    <property type="entry name" value="IF_1"/>
    <property type="match status" value="1"/>
</dbReference>
<dbReference type="InterPro" id="IPR012340">
    <property type="entry name" value="NA-bd_OB-fold"/>
</dbReference>
<dbReference type="InterPro" id="IPR006196">
    <property type="entry name" value="RNA-binding_domain_S1_IF1"/>
</dbReference>
<dbReference type="InterPro" id="IPR003029">
    <property type="entry name" value="S1_domain"/>
</dbReference>
<dbReference type="InterPro" id="IPR004368">
    <property type="entry name" value="TIF_IF1"/>
</dbReference>
<dbReference type="NCBIfam" id="TIGR00008">
    <property type="entry name" value="infA"/>
    <property type="match status" value="1"/>
</dbReference>
<dbReference type="PANTHER" id="PTHR33370">
    <property type="entry name" value="TRANSLATION INITIATION FACTOR IF-1, CHLOROPLASTIC"/>
    <property type="match status" value="1"/>
</dbReference>
<dbReference type="PANTHER" id="PTHR33370:SF1">
    <property type="entry name" value="TRANSLATION INITIATION FACTOR IF-1, CHLOROPLASTIC"/>
    <property type="match status" value="1"/>
</dbReference>
<dbReference type="Pfam" id="PF01176">
    <property type="entry name" value="eIF-1a"/>
    <property type="match status" value="1"/>
</dbReference>
<dbReference type="SMART" id="SM00316">
    <property type="entry name" value="S1"/>
    <property type="match status" value="1"/>
</dbReference>
<dbReference type="SUPFAM" id="SSF50249">
    <property type="entry name" value="Nucleic acid-binding proteins"/>
    <property type="match status" value="1"/>
</dbReference>
<dbReference type="PROSITE" id="PS50832">
    <property type="entry name" value="S1_IF1_TYPE"/>
    <property type="match status" value="1"/>
</dbReference>
<organism>
    <name type="scientific">Clostridium botulinum (strain Langeland / NCTC 10281 / Type F)</name>
    <dbReference type="NCBI Taxonomy" id="441772"/>
    <lineage>
        <taxon>Bacteria</taxon>
        <taxon>Bacillati</taxon>
        <taxon>Bacillota</taxon>
        <taxon>Clostridia</taxon>
        <taxon>Eubacteriales</taxon>
        <taxon>Clostridiaceae</taxon>
        <taxon>Clostridium</taxon>
    </lineage>
</organism>
<name>IF1_CLOBL</name>
<comment type="function">
    <text evidence="1">One of the essential components for the initiation of protein synthesis. Stabilizes the binding of IF-2 and IF-3 on the 30S subunit to which N-formylmethionyl-tRNA(fMet) subsequently binds. Helps modulate mRNA selection, yielding the 30S pre-initiation complex (PIC). Upon addition of the 50S ribosomal subunit IF-1, IF-2 and IF-3 are released leaving the mature 70S translation initiation complex.</text>
</comment>
<comment type="subunit">
    <text evidence="1">Component of the 30S ribosomal translation pre-initiation complex which assembles on the 30S ribosome in the order IF-2 and IF-3, IF-1 and N-formylmethionyl-tRNA(fMet); mRNA recruitment can occur at any time during PIC assembly.</text>
</comment>
<comment type="subcellular location">
    <subcellularLocation>
        <location evidence="1">Cytoplasm</location>
    </subcellularLocation>
</comment>
<comment type="similarity">
    <text evidence="1">Belongs to the IF-1 family.</text>
</comment>
<feature type="chain" id="PRO_0000338805" description="Translation initiation factor IF-1">
    <location>
        <begin position="1"/>
        <end position="72"/>
    </location>
</feature>
<feature type="domain" description="S1-like" evidence="1">
    <location>
        <begin position="1"/>
        <end position="72"/>
    </location>
</feature>
<evidence type="ECO:0000255" key="1">
    <source>
        <dbReference type="HAMAP-Rule" id="MF_00075"/>
    </source>
</evidence>
<reference key="1">
    <citation type="submission" date="2007-06" db="EMBL/GenBank/DDBJ databases">
        <authorList>
            <person name="Brinkac L.M."/>
            <person name="Daugherty S."/>
            <person name="Dodson R.J."/>
            <person name="Madupu R."/>
            <person name="Brown J.L."/>
            <person name="Bruce D."/>
            <person name="Detter C."/>
            <person name="Munk C."/>
            <person name="Smith L.A."/>
            <person name="Smith T.J."/>
            <person name="White O."/>
            <person name="Brettin T.S."/>
        </authorList>
    </citation>
    <scope>NUCLEOTIDE SEQUENCE [LARGE SCALE GENOMIC DNA]</scope>
    <source>
        <strain>Langeland / NCTC 10281 / Type F</strain>
    </source>
</reference>
<accession>A7GJ50</accession>